<protein>
    <recommendedName>
        <fullName evidence="2">Small ribosomal subunit protein uS17B</fullName>
    </recommendedName>
    <alternativeName>
        <fullName>40S ribosomal protein S11-B</fullName>
    </alternativeName>
</protein>
<dbReference type="EMBL" id="CU329670">
    <property type="protein sequence ID" value="CAB59691.1"/>
    <property type="molecule type" value="Genomic_DNA"/>
</dbReference>
<dbReference type="PIR" id="T37678">
    <property type="entry name" value="T37678"/>
</dbReference>
<dbReference type="RefSeq" id="NP_594672.1">
    <property type="nucleotide sequence ID" value="NM_001020101.2"/>
</dbReference>
<dbReference type="PDB" id="9AXT">
    <property type="method" value="EM"/>
    <property type="resolution" value="2.40 A"/>
    <property type="chains" value="AO=1-152"/>
</dbReference>
<dbReference type="PDBsum" id="9AXT"/>
<dbReference type="SMR" id="P0CT74"/>
<dbReference type="FunCoup" id="P0CT74">
    <property type="interactions" value="458"/>
</dbReference>
<dbReference type="STRING" id="284812.P0CT74"/>
<dbReference type="iPTMnet" id="P0CT74"/>
<dbReference type="EnsemblFungi" id="SPAC144.11.1">
    <property type="protein sequence ID" value="SPAC144.11.1:pep"/>
    <property type="gene ID" value="SPAC144.11"/>
</dbReference>
<dbReference type="EnsemblFungi" id="SPAC31G5.03.1">
    <property type="protein sequence ID" value="SPAC31G5.03.1:pep"/>
    <property type="gene ID" value="SPAC31G5.03"/>
</dbReference>
<dbReference type="GeneID" id="2542904"/>
<dbReference type="KEGG" id="spo:2542904"/>
<dbReference type="KEGG" id="spo:2543120"/>
<dbReference type="PomBase" id="SPAC144.11">
    <property type="gene designation" value="rps1102"/>
</dbReference>
<dbReference type="VEuPathDB" id="FungiDB:SPAC144.11"/>
<dbReference type="VEuPathDB" id="FungiDB:SPAC31G5.03"/>
<dbReference type="InParanoid" id="P0CT74"/>
<dbReference type="OMA" id="DYEKCPF"/>
<dbReference type="PhylomeDB" id="P0CT74"/>
<dbReference type="Reactome" id="R-SPO-156827">
    <property type="pathway name" value="L13a-mediated translational silencing of Ceruloplasmin expression"/>
</dbReference>
<dbReference type="Reactome" id="R-SPO-1799339">
    <property type="pathway name" value="SRP-dependent cotranslational protein targeting to membrane"/>
</dbReference>
<dbReference type="Reactome" id="R-SPO-72649">
    <property type="pathway name" value="Translation initiation complex formation"/>
</dbReference>
<dbReference type="Reactome" id="R-SPO-72689">
    <property type="pathway name" value="Formation of a pool of free 40S subunits"/>
</dbReference>
<dbReference type="Reactome" id="R-SPO-72695">
    <property type="pathway name" value="Formation of the ternary complex, and subsequently, the 43S complex"/>
</dbReference>
<dbReference type="Reactome" id="R-SPO-72702">
    <property type="pathway name" value="Ribosomal scanning and start codon recognition"/>
</dbReference>
<dbReference type="Reactome" id="R-SPO-72706">
    <property type="pathway name" value="GTP hydrolysis and joining of the 60S ribosomal subunit"/>
</dbReference>
<dbReference type="Reactome" id="R-SPO-975956">
    <property type="pathway name" value="Nonsense Mediated Decay (NMD) independent of the Exon Junction Complex (EJC)"/>
</dbReference>
<dbReference type="Reactome" id="R-SPO-975957">
    <property type="pathway name" value="Nonsense Mediated Decay (NMD) enhanced by the Exon Junction Complex (EJC)"/>
</dbReference>
<dbReference type="PRO" id="PR:P0CT74"/>
<dbReference type="Proteomes" id="UP000002485">
    <property type="component" value="Chromosome I"/>
</dbReference>
<dbReference type="GO" id="GO:0022627">
    <property type="term" value="C:cytosolic small ribosomal subunit"/>
    <property type="evidence" value="ECO:0000318"/>
    <property type="project" value="GO_Central"/>
</dbReference>
<dbReference type="GO" id="GO:0019843">
    <property type="term" value="F:rRNA binding"/>
    <property type="evidence" value="ECO:0007669"/>
    <property type="project" value="UniProtKB-KW"/>
</dbReference>
<dbReference type="GO" id="GO:0003735">
    <property type="term" value="F:structural constituent of ribosome"/>
    <property type="evidence" value="ECO:0000318"/>
    <property type="project" value="GO_Central"/>
</dbReference>
<dbReference type="GO" id="GO:0002181">
    <property type="term" value="P:cytoplasmic translation"/>
    <property type="evidence" value="ECO:0000266"/>
    <property type="project" value="PomBase"/>
</dbReference>
<dbReference type="GO" id="GO:0042254">
    <property type="term" value="P:ribosome biogenesis"/>
    <property type="evidence" value="ECO:0000266"/>
    <property type="project" value="PomBase"/>
</dbReference>
<dbReference type="CDD" id="cd00364">
    <property type="entry name" value="Ribosomal_uS17"/>
    <property type="match status" value="1"/>
</dbReference>
<dbReference type="FunFam" id="2.40.50.1000:FF:000001">
    <property type="entry name" value="40S ribosomal protein S11"/>
    <property type="match status" value="1"/>
</dbReference>
<dbReference type="Gene3D" id="2.40.50.1000">
    <property type="match status" value="1"/>
</dbReference>
<dbReference type="InterPro" id="IPR012340">
    <property type="entry name" value="NA-bd_OB-fold"/>
</dbReference>
<dbReference type="InterPro" id="IPR000266">
    <property type="entry name" value="Ribosomal_uS17"/>
</dbReference>
<dbReference type="InterPro" id="IPR028333">
    <property type="entry name" value="Ribosomal_uS17_arc/euk"/>
</dbReference>
<dbReference type="InterPro" id="IPR019979">
    <property type="entry name" value="Ribosomal_uS17_CS"/>
</dbReference>
<dbReference type="InterPro" id="IPR032440">
    <property type="entry name" value="Ribosomal_uS17_N"/>
</dbReference>
<dbReference type="NCBIfam" id="NF006345">
    <property type="entry name" value="PRK08572.1"/>
    <property type="match status" value="1"/>
</dbReference>
<dbReference type="NCBIfam" id="TIGR03630">
    <property type="entry name" value="uS17_arch"/>
    <property type="match status" value="1"/>
</dbReference>
<dbReference type="PANTHER" id="PTHR10744">
    <property type="entry name" value="40S RIBOSOMAL PROTEIN S11 FAMILY MEMBER"/>
    <property type="match status" value="1"/>
</dbReference>
<dbReference type="PANTHER" id="PTHR10744:SF9">
    <property type="entry name" value="40S RIBOSOMAL PROTEIN S11-RELATED"/>
    <property type="match status" value="1"/>
</dbReference>
<dbReference type="Pfam" id="PF00366">
    <property type="entry name" value="Ribosomal_S17"/>
    <property type="match status" value="1"/>
</dbReference>
<dbReference type="Pfam" id="PF16205">
    <property type="entry name" value="Ribosomal_S17_N"/>
    <property type="match status" value="1"/>
</dbReference>
<dbReference type="PRINTS" id="PR00973">
    <property type="entry name" value="RIBOSOMALS17"/>
</dbReference>
<dbReference type="SUPFAM" id="SSF50249">
    <property type="entry name" value="Nucleic acid-binding proteins"/>
    <property type="match status" value="1"/>
</dbReference>
<dbReference type="PROSITE" id="PS00056">
    <property type="entry name" value="RIBOSOMAL_S17"/>
    <property type="match status" value="1"/>
</dbReference>
<name>RS11B_SCHPO</name>
<reference key="1">
    <citation type="journal article" date="2002" name="Nature">
        <title>The genome sequence of Schizosaccharomyces pombe.</title>
        <authorList>
            <person name="Wood V."/>
            <person name="Gwilliam R."/>
            <person name="Rajandream M.A."/>
            <person name="Lyne M.H."/>
            <person name="Lyne R."/>
            <person name="Stewart A."/>
            <person name="Sgouros J.G."/>
            <person name="Peat N."/>
            <person name="Hayles J."/>
            <person name="Baker S.G."/>
            <person name="Basham D."/>
            <person name="Bowman S."/>
            <person name="Brooks K."/>
            <person name="Brown D."/>
            <person name="Brown S."/>
            <person name="Chillingworth T."/>
            <person name="Churcher C.M."/>
            <person name="Collins M."/>
            <person name="Connor R."/>
            <person name="Cronin A."/>
            <person name="Davis P."/>
            <person name="Feltwell T."/>
            <person name="Fraser A."/>
            <person name="Gentles S."/>
            <person name="Goble A."/>
            <person name="Hamlin N."/>
            <person name="Harris D.E."/>
            <person name="Hidalgo J."/>
            <person name="Hodgson G."/>
            <person name="Holroyd S."/>
            <person name="Hornsby T."/>
            <person name="Howarth S."/>
            <person name="Huckle E.J."/>
            <person name="Hunt S."/>
            <person name="Jagels K."/>
            <person name="James K.D."/>
            <person name="Jones L."/>
            <person name="Jones M."/>
            <person name="Leather S."/>
            <person name="McDonald S."/>
            <person name="McLean J."/>
            <person name="Mooney P."/>
            <person name="Moule S."/>
            <person name="Mungall K.L."/>
            <person name="Murphy L.D."/>
            <person name="Niblett D."/>
            <person name="Odell C."/>
            <person name="Oliver K."/>
            <person name="O'Neil S."/>
            <person name="Pearson D."/>
            <person name="Quail M.A."/>
            <person name="Rabbinowitsch E."/>
            <person name="Rutherford K.M."/>
            <person name="Rutter S."/>
            <person name="Saunders D."/>
            <person name="Seeger K."/>
            <person name="Sharp S."/>
            <person name="Skelton J."/>
            <person name="Simmonds M.N."/>
            <person name="Squares R."/>
            <person name="Squares S."/>
            <person name="Stevens K."/>
            <person name="Taylor K."/>
            <person name="Taylor R.G."/>
            <person name="Tivey A."/>
            <person name="Walsh S.V."/>
            <person name="Warren T."/>
            <person name="Whitehead S."/>
            <person name="Woodward J.R."/>
            <person name="Volckaert G."/>
            <person name="Aert R."/>
            <person name="Robben J."/>
            <person name="Grymonprez B."/>
            <person name="Weltjens I."/>
            <person name="Vanstreels E."/>
            <person name="Rieger M."/>
            <person name="Schaefer M."/>
            <person name="Mueller-Auer S."/>
            <person name="Gabel C."/>
            <person name="Fuchs M."/>
            <person name="Duesterhoeft A."/>
            <person name="Fritzc C."/>
            <person name="Holzer E."/>
            <person name="Moestl D."/>
            <person name="Hilbert H."/>
            <person name="Borzym K."/>
            <person name="Langer I."/>
            <person name="Beck A."/>
            <person name="Lehrach H."/>
            <person name="Reinhardt R."/>
            <person name="Pohl T.M."/>
            <person name="Eger P."/>
            <person name="Zimmermann W."/>
            <person name="Wedler H."/>
            <person name="Wambutt R."/>
            <person name="Purnelle B."/>
            <person name="Goffeau A."/>
            <person name="Cadieu E."/>
            <person name="Dreano S."/>
            <person name="Gloux S."/>
            <person name="Lelaure V."/>
            <person name="Mottier S."/>
            <person name="Galibert F."/>
            <person name="Aves S.J."/>
            <person name="Xiang Z."/>
            <person name="Hunt C."/>
            <person name="Moore K."/>
            <person name="Hurst S.M."/>
            <person name="Lucas M."/>
            <person name="Rochet M."/>
            <person name="Gaillardin C."/>
            <person name="Tallada V.A."/>
            <person name="Garzon A."/>
            <person name="Thode G."/>
            <person name="Daga R.R."/>
            <person name="Cruzado L."/>
            <person name="Jimenez J."/>
            <person name="Sanchez M."/>
            <person name="del Rey F."/>
            <person name="Benito J."/>
            <person name="Dominguez A."/>
            <person name="Revuelta J.L."/>
            <person name="Moreno S."/>
            <person name="Armstrong J."/>
            <person name="Forsburg S.L."/>
            <person name="Cerutti L."/>
            <person name="Lowe T."/>
            <person name="McCombie W.R."/>
            <person name="Paulsen I."/>
            <person name="Potashkin J."/>
            <person name="Shpakovski G.V."/>
            <person name="Ussery D."/>
            <person name="Barrell B.G."/>
            <person name="Nurse P."/>
        </authorList>
    </citation>
    <scope>NUCLEOTIDE SEQUENCE [LARGE SCALE GENOMIC DNA]</scope>
    <source>
        <strain>972 / ATCC 24843</strain>
    </source>
</reference>
<feature type="chain" id="PRO_0000433414" description="Small ribosomal subunit protein uS17B">
    <location>
        <begin position="1"/>
        <end position="152"/>
    </location>
</feature>
<evidence type="ECO:0000250" key="1">
    <source>
        <dbReference type="UniProtKB" id="P0CX48"/>
    </source>
</evidence>
<evidence type="ECO:0000305" key="2"/>
<comment type="function">
    <text evidence="1">Component of the ribosome, a large ribonucleoprotein complex responsible for the synthesis of proteins in the cell. The small ribosomal subunit (SSU) binds messenger RNAs (mRNAs) and translates the encoded message by selecting cognate aminoacyl-transfer RNA (tRNA) molecules. The large subunit (LSU) contains the ribosomal catalytic site termed the peptidyl transferase center (PTC), which catalyzes the formation of peptide bonds, thereby polymerizing the amino acids delivered by tRNAs into a polypeptide chain. The nascent polypeptides leave the ribosome through a tunnel in the LSU and interact with protein factors that function in enzymatic processing, targeting, and the membrane insertion of nascent chains at the exit of the ribosomal tunnel.</text>
</comment>
<comment type="subunit">
    <text evidence="1">Component of the small ribosomal subunit (SSU). Mature yeast ribosomes consist of a small (40S) and a large (60S) subunit. The 40S small subunit contains 1 molecule of ribosomal RNA (18S rRNA) and at least 33 different proteins. The large 60S subunit contains 3 rRNA molecules (25S, 5.8S and 5S rRNA) and at least 46 different proteins.</text>
</comment>
<comment type="subcellular location">
    <subcellularLocation>
        <location evidence="1">Cytoplasm</location>
    </subcellularLocation>
</comment>
<comment type="miscellaneous">
    <text>There are 2 genes for uS17 in S.pombe.</text>
</comment>
<comment type="similarity">
    <text evidence="2">Belongs to the universal ribosomal protein uS17 family.</text>
</comment>
<gene>
    <name type="primary">rps1102</name>
    <name type="synonym">rps11b</name>
    <name type="ORF">SPAC144.11</name>
</gene>
<keyword id="KW-0002">3D-structure</keyword>
<keyword id="KW-0963">Cytoplasm</keyword>
<keyword id="KW-1185">Reference proteome</keyword>
<keyword id="KW-0687">Ribonucleoprotein</keyword>
<keyword id="KW-0689">Ribosomal protein</keyword>
<keyword id="KW-0694">RNA-binding</keyword>
<keyword id="KW-0699">rRNA-binding</keyword>
<proteinExistence type="evidence at protein level"/>
<accession>P0CT74</accession>
<accession>O14385</accession>
<accession>P79013</accession>
<organism>
    <name type="scientific">Schizosaccharomyces pombe (strain 972 / ATCC 24843)</name>
    <name type="common">Fission yeast</name>
    <dbReference type="NCBI Taxonomy" id="284812"/>
    <lineage>
        <taxon>Eukaryota</taxon>
        <taxon>Fungi</taxon>
        <taxon>Dikarya</taxon>
        <taxon>Ascomycota</taxon>
        <taxon>Taphrinomycotina</taxon>
        <taxon>Schizosaccharomycetes</taxon>
        <taxon>Schizosaccharomycetales</taxon>
        <taxon>Schizosaccharomycetaceae</taxon>
        <taxon>Schizosaccharomyces</taxon>
    </lineage>
</organism>
<sequence length="152" mass="17500">MATELVVQSERAFQKQPHIFQNAKKGAGRRWYKDVGLGFKTPAEAIYGEYVDKKCPFVGQVSIRGRILTGTVVSTKMHRTIIIRREYLHFIPKYNRYEKRHKNLAAHVSPAFRINEGDVVTVGQCRPLSKTVRFNVLRVVKHTEGPKQFGKF</sequence>